<proteinExistence type="inferred from homology"/>
<evidence type="ECO:0000255" key="1">
    <source>
        <dbReference type="HAMAP-Rule" id="MF_00472"/>
    </source>
</evidence>
<reference key="1">
    <citation type="journal article" date="2002" name="Nat. Biotechnol.">
        <title>Genome sequence of the dissimilatory metal ion-reducing bacterium Shewanella oneidensis.</title>
        <authorList>
            <person name="Heidelberg J.F."/>
            <person name="Paulsen I.T."/>
            <person name="Nelson K.E."/>
            <person name="Gaidos E.J."/>
            <person name="Nelson W.C."/>
            <person name="Read T.D."/>
            <person name="Eisen J.A."/>
            <person name="Seshadri R."/>
            <person name="Ward N.L."/>
            <person name="Methe B.A."/>
            <person name="Clayton R.A."/>
            <person name="Meyer T."/>
            <person name="Tsapin A."/>
            <person name="Scott J."/>
            <person name="Beanan M.J."/>
            <person name="Brinkac L.M."/>
            <person name="Daugherty S.C."/>
            <person name="DeBoy R.T."/>
            <person name="Dodson R.J."/>
            <person name="Durkin A.S."/>
            <person name="Haft D.H."/>
            <person name="Kolonay J.F."/>
            <person name="Madupu R."/>
            <person name="Peterson J.D."/>
            <person name="Umayam L.A."/>
            <person name="White O."/>
            <person name="Wolf A.M."/>
            <person name="Vamathevan J.J."/>
            <person name="Weidman J.F."/>
            <person name="Impraim M."/>
            <person name="Lee K."/>
            <person name="Berry K.J."/>
            <person name="Lee C."/>
            <person name="Mueller J."/>
            <person name="Khouri H.M."/>
            <person name="Gill J."/>
            <person name="Utterback T.R."/>
            <person name="McDonald L.A."/>
            <person name="Feldblyum T.V."/>
            <person name="Smith H.O."/>
            <person name="Venter J.C."/>
            <person name="Nealson K.H."/>
            <person name="Fraser C.M."/>
        </authorList>
    </citation>
    <scope>NUCLEOTIDE SEQUENCE [LARGE SCALE GENOMIC DNA]</scope>
    <source>
        <strain>ATCC 700550 / JCM 31522 / CIP 106686 / LMG 19005 / NCIMB 14063 / MR-1</strain>
    </source>
</reference>
<organism>
    <name type="scientific">Shewanella oneidensis (strain ATCC 700550 / JCM 31522 / CIP 106686 / LMG 19005 / NCIMB 14063 / MR-1)</name>
    <dbReference type="NCBI Taxonomy" id="211586"/>
    <lineage>
        <taxon>Bacteria</taxon>
        <taxon>Pseudomonadati</taxon>
        <taxon>Pseudomonadota</taxon>
        <taxon>Gammaproteobacteria</taxon>
        <taxon>Alteromonadales</taxon>
        <taxon>Shewanellaceae</taxon>
        <taxon>Shewanella</taxon>
    </lineage>
</organism>
<dbReference type="EC" id="2.1.1.222" evidence="1"/>
<dbReference type="EC" id="2.1.1.64" evidence="1"/>
<dbReference type="EMBL" id="AE014299">
    <property type="protein sequence ID" value="AAN55447.1"/>
    <property type="molecule type" value="Genomic_DNA"/>
</dbReference>
<dbReference type="RefSeq" id="NP_718003.1">
    <property type="nucleotide sequence ID" value="NC_004347.2"/>
</dbReference>
<dbReference type="RefSeq" id="WP_011072390.1">
    <property type="nucleotide sequence ID" value="NC_004347.2"/>
</dbReference>
<dbReference type="SMR" id="Q8EEG9"/>
<dbReference type="STRING" id="211586.SO_2413"/>
<dbReference type="PaxDb" id="211586-SO_2413"/>
<dbReference type="DNASU" id="1170128"/>
<dbReference type="KEGG" id="son:SO_2413"/>
<dbReference type="PATRIC" id="fig|211586.12.peg.2321"/>
<dbReference type="eggNOG" id="COG2227">
    <property type="taxonomic scope" value="Bacteria"/>
</dbReference>
<dbReference type="HOGENOM" id="CLU_042432_5_0_6"/>
<dbReference type="OrthoDB" id="9801538at2"/>
<dbReference type="PhylomeDB" id="Q8EEG9"/>
<dbReference type="BioCyc" id="SONE211586:G1GMP-2205-MONOMER"/>
<dbReference type="UniPathway" id="UPA00232"/>
<dbReference type="Proteomes" id="UP000008186">
    <property type="component" value="Chromosome"/>
</dbReference>
<dbReference type="GO" id="GO:0102208">
    <property type="term" value="F:2-polyprenyl-6-hydroxyphenol methylase activity"/>
    <property type="evidence" value="ECO:0007669"/>
    <property type="project" value="UniProtKB-EC"/>
</dbReference>
<dbReference type="GO" id="GO:0061542">
    <property type="term" value="F:3-demethylubiquinol 3-O-methyltransferase activity"/>
    <property type="evidence" value="ECO:0007669"/>
    <property type="project" value="UniProtKB-UniRule"/>
</dbReference>
<dbReference type="GO" id="GO:0008168">
    <property type="term" value="F:methyltransferase activity"/>
    <property type="evidence" value="ECO:0000318"/>
    <property type="project" value="GO_Central"/>
</dbReference>
<dbReference type="GO" id="GO:0010420">
    <property type="term" value="F:polyprenyldihydroxybenzoate methyltransferase activity"/>
    <property type="evidence" value="ECO:0007669"/>
    <property type="project" value="InterPro"/>
</dbReference>
<dbReference type="GO" id="GO:0032259">
    <property type="term" value="P:methylation"/>
    <property type="evidence" value="ECO:0007669"/>
    <property type="project" value="UniProtKB-KW"/>
</dbReference>
<dbReference type="CDD" id="cd02440">
    <property type="entry name" value="AdoMet_MTases"/>
    <property type="match status" value="1"/>
</dbReference>
<dbReference type="FunFam" id="3.40.50.150:FF:000028">
    <property type="entry name" value="Ubiquinone biosynthesis O-methyltransferase"/>
    <property type="match status" value="1"/>
</dbReference>
<dbReference type="Gene3D" id="3.40.50.150">
    <property type="entry name" value="Vaccinia Virus protein VP39"/>
    <property type="match status" value="1"/>
</dbReference>
<dbReference type="HAMAP" id="MF_00472">
    <property type="entry name" value="UbiG"/>
    <property type="match status" value="1"/>
</dbReference>
<dbReference type="InterPro" id="IPR029063">
    <property type="entry name" value="SAM-dependent_MTases_sf"/>
</dbReference>
<dbReference type="InterPro" id="IPR010233">
    <property type="entry name" value="UbiG_MeTrfase"/>
</dbReference>
<dbReference type="NCBIfam" id="TIGR01983">
    <property type="entry name" value="UbiG"/>
    <property type="match status" value="1"/>
</dbReference>
<dbReference type="PANTHER" id="PTHR43464">
    <property type="entry name" value="METHYLTRANSFERASE"/>
    <property type="match status" value="1"/>
</dbReference>
<dbReference type="PANTHER" id="PTHR43464:SF19">
    <property type="entry name" value="UBIQUINONE BIOSYNTHESIS O-METHYLTRANSFERASE, MITOCHONDRIAL"/>
    <property type="match status" value="1"/>
</dbReference>
<dbReference type="Pfam" id="PF13489">
    <property type="entry name" value="Methyltransf_23"/>
    <property type="match status" value="1"/>
</dbReference>
<dbReference type="SUPFAM" id="SSF53335">
    <property type="entry name" value="S-adenosyl-L-methionine-dependent methyltransferases"/>
    <property type="match status" value="1"/>
</dbReference>
<protein>
    <recommendedName>
        <fullName evidence="1">Ubiquinone biosynthesis O-methyltransferase</fullName>
    </recommendedName>
    <alternativeName>
        <fullName evidence="1">2-polyprenyl-6-hydroxyphenol methylase</fullName>
        <ecNumber evidence="1">2.1.1.222</ecNumber>
    </alternativeName>
    <alternativeName>
        <fullName evidence="1">3-demethylubiquinone 3-O-methyltransferase</fullName>
        <ecNumber evidence="1">2.1.1.64</ecNumber>
    </alternativeName>
</protein>
<accession>Q8EEG9</accession>
<keyword id="KW-0489">Methyltransferase</keyword>
<keyword id="KW-1185">Reference proteome</keyword>
<keyword id="KW-0949">S-adenosyl-L-methionine</keyword>
<keyword id="KW-0808">Transferase</keyword>
<keyword id="KW-0831">Ubiquinone biosynthesis</keyword>
<gene>
    <name evidence="1" type="primary">ubiG</name>
    <name type="ordered locus">SO_2413</name>
</gene>
<comment type="function">
    <text evidence="1">O-methyltransferase that catalyzes the 2 O-methylation steps in the ubiquinone biosynthetic pathway.</text>
</comment>
<comment type="catalytic activity">
    <reaction evidence="1">
        <text>a 3-demethylubiquinol + S-adenosyl-L-methionine = a ubiquinol + S-adenosyl-L-homocysteine + H(+)</text>
        <dbReference type="Rhea" id="RHEA:44380"/>
        <dbReference type="Rhea" id="RHEA-COMP:9566"/>
        <dbReference type="Rhea" id="RHEA-COMP:10914"/>
        <dbReference type="ChEBI" id="CHEBI:15378"/>
        <dbReference type="ChEBI" id="CHEBI:17976"/>
        <dbReference type="ChEBI" id="CHEBI:57856"/>
        <dbReference type="ChEBI" id="CHEBI:59789"/>
        <dbReference type="ChEBI" id="CHEBI:84422"/>
        <dbReference type="EC" id="2.1.1.64"/>
    </reaction>
</comment>
<comment type="catalytic activity">
    <reaction evidence="1">
        <text>a 3-(all-trans-polyprenyl)benzene-1,2-diol + S-adenosyl-L-methionine = a 2-methoxy-6-(all-trans-polyprenyl)phenol + S-adenosyl-L-homocysteine + H(+)</text>
        <dbReference type="Rhea" id="RHEA:31411"/>
        <dbReference type="Rhea" id="RHEA-COMP:9550"/>
        <dbReference type="Rhea" id="RHEA-COMP:9551"/>
        <dbReference type="ChEBI" id="CHEBI:15378"/>
        <dbReference type="ChEBI" id="CHEBI:57856"/>
        <dbReference type="ChEBI" id="CHEBI:59789"/>
        <dbReference type="ChEBI" id="CHEBI:62729"/>
        <dbReference type="ChEBI" id="CHEBI:62731"/>
        <dbReference type="EC" id="2.1.1.222"/>
    </reaction>
</comment>
<comment type="pathway">
    <text evidence="1">Cofactor biosynthesis; ubiquinone biosynthesis.</text>
</comment>
<comment type="similarity">
    <text evidence="1">Belongs to the methyltransferase superfamily. UbiG/COQ3 family.</text>
</comment>
<feature type="chain" id="PRO_0000193403" description="Ubiquinone biosynthesis O-methyltransferase">
    <location>
        <begin position="1"/>
        <end position="236"/>
    </location>
</feature>
<feature type="binding site" evidence="1">
    <location>
        <position position="39"/>
    </location>
    <ligand>
        <name>S-adenosyl-L-methionine</name>
        <dbReference type="ChEBI" id="CHEBI:59789"/>
    </ligand>
</feature>
<feature type="binding site" evidence="1">
    <location>
        <position position="59"/>
    </location>
    <ligand>
        <name>S-adenosyl-L-methionine</name>
        <dbReference type="ChEBI" id="CHEBI:59789"/>
    </ligand>
</feature>
<feature type="binding site" evidence="1">
    <location>
        <position position="80"/>
    </location>
    <ligand>
        <name>S-adenosyl-L-methionine</name>
        <dbReference type="ChEBI" id="CHEBI:59789"/>
    </ligand>
</feature>
<feature type="binding site" evidence="1">
    <location>
        <position position="124"/>
    </location>
    <ligand>
        <name>S-adenosyl-L-methionine</name>
        <dbReference type="ChEBI" id="CHEBI:59789"/>
    </ligand>
</feature>
<sequence>MQQNTNVDPQEIAKFERMAETWWDLNGEFKPLHLLNPLRLNYIDQTAGGIFGKKVLDVGCGGGILSESMARIGAIVDGLDMGEEPLEVARLHALETGVSINYVKNTAEAHREDHREYYDVVTCMEMLEHVPDPQSVIQACCDMVKPGGFVFFSTINRNVRSFVETIIGAEYLLKMLPIGTHDHNKFIKPSELIDLVDNTELICKDALGITYNPLTGIFKYTSKVDVNYMIATQKVD</sequence>
<name>UBIG_SHEON</name>